<name>RBS_GOSHI</name>
<gene>
    <name evidence="1" type="primary">RBCS</name>
</gene>
<dbReference type="EMBL" id="X54091">
    <property type="protein sequence ID" value="CAA38026.1"/>
    <property type="molecule type" value="Genomic_DNA"/>
</dbReference>
<dbReference type="PIR" id="S18344">
    <property type="entry name" value="RKCNSU"/>
</dbReference>
<dbReference type="RefSeq" id="XP_016743507.1">
    <property type="nucleotide sequence ID" value="XM_016888018.1"/>
</dbReference>
<dbReference type="SMR" id="P31333"/>
<dbReference type="STRING" id="3635.P31333"/>
<dbReference type="PaxDb" id="3635-P31333"/>
<dbReference type="KEGG" id="ghi:107952825"/>
<dbReference type="OMA" id="EAWIRII"/>
<dbReference type="Proteomes" id="UP000189702">
    <property type="component" value="Chromosome 9"/>
</dbReference>
<dbReference type="GO" id="GO:0009507">
    <property type="term" value="C:chloroplast"/>
    <property type="evidence" value="ECO:0007669"/>
    <property type="project" value="UniProtKB-SubCell"/>
</dbReference>
<dbReference type="GO" id="GO:0016984">
    <property type="term" value="F:ribulose-bisphosphate carboxylase activity"/>
    <property type="evidence" value="ECO:0007669"/>
    <property type="project" value="UniProtKB-UniRule"/>
</dbReference>
<dbReference type="GO" id="GO:0009853">
    <property type="term" value="P:photorespiration"/>
    <property type="evidence" value="ECO:0007669"/>
    <property type="project" value="UniProtKB-KW"/>
</dbReference>
<dbReference type="GO" id="GO:0019253">
    <property type="term" value="P:reductive pentose-phosphate cycle"/>
    <property type="evidence" value="ECO:0007669"/>
    <property type="project" value="UniProtKB-UniRule"/>
</dbReference>
<dbReference type="CDD" id="cd03527">
    <property type="entry name" value="RuBisCO_small"/>
    <property type="match status" value="1"/>
</dbReference>
<dbReference type="FunFam" id="3.30.190.10:FF:000001">
    <property type="entry name" value="Ribulose bisphosphate carboxylase small chain, chloroplastic"/>
    <property type="match status" value="1"/>
</dbReference>
<dbReference type="Gene3D" id="3.30.190.10">
    <property type="entry name" value="Ribulose bisphosphate carboxylase, small subunit"/>
    <property type="match status" value="1"/>
</dbReference>
<dbReference type="HAMAP" id="MF_00859">
    <property type="entry name" value="RuBisCO_S_bact"/>
    <property type="match status" value="1"/>
</dbReference>
<dbReference type="InterPro" id="IPR024681">
    <property type="entry name" value="RuBisCO_ssu"/>
</dbReference>
<dbReference type="InterPro" id="IPR000894">
    <property type="entry name" value="RuBisCO_ssu_dom"/>
</dbReference>
<dbReference type="InterPro" id="IPR024680">
    <property type="entry name" value="RuBisCO_ssu_N"/>
</dbReference>
<dbReference type="InterPro" id="IPR036385">
    <property type="entry name" value="RuBisCO_ssu_sf"/>
</dbReference>
<dbReference type="PANTHER" id="PTHR31262">
    <property type="entry name" value="RIBULOSE BISPHOSPHATE CARBOXYLASE SMALL CHAIN 1, CHLOROPLASTIC"/>
    <property type="match status" value="1"/>
</dbReference>
<dbReference type="PANTHER" id="PTHR31262:SF10">
    <property type="entry name" value="RIBULOSE BISPHOSPHATE CARBOXYLASE SMALL SUBUNIT 1A, CHLOROPLASTIC-RELATED"/>
    <property type="match status" value="1"/>
</dbReference>
<dbReference type="Pfam" id="PF12338">
    <property type="entry name" value="RbcS"/>
    <property type="match status" value="1"/>
</dbReference>
<dbReference type="Pfam" id="PF00101">
    <property type="entry name" value="RuBisCO_small"/>
    <property type="match status" value="1"/>
</dbReference>
<dbReference type="PRINTS" id="PR00152">
    <property type="entry name" value="RUBISCOSMALL"/>
</dbReference>
<dbReference type="SMART" id="SM00961">
    <property type="entry name" value="RuBisCO_small"/>
    <property type="match status" value="1"/>
</dbReference>
<dbReference type="SUPFAM" id="SSF55239">
    <property type="entry name" value="RuBisCO, small subunit"/>
    <property type="match status" value="1"/>
</dbReference>
<feature type="transit peptide" description="Chloroplast" evidence="1">
    <location>
        <begin position="1"/>
        <end position="58"/>
    </location>
</feature>
<feature type="chain" id="PRO_0000031506" description="Ribulose bisphosphate carboxylase small subunit, chloroplastic" evidence="1">
    <location>
        <begin position="59"/>
        <end position="182"/>
    </location>
</feature>
<feature type="sequence variant">
    <original>L</original>
    <variation>T</variation>
    <location>
        <position position="66"/>
    </location>
</feature>
<feature type="sequence variant">
    <original>I</original>
    <variation>V</variation>
    <location>
        <position position="98"/>
    </location>
</feature>
<feature type="sequence variant">
    <original>N</original>
    <variation>E</variation>
    <location>
        <position position="148"/>
    </location>
</feature>
<accession>P31333</accession>
<protein>
    <recommendedName>
        <fullName evidence="1">Ribulose bisphosphate carboxylase small subunit, chloroplastic</fullName>
        <shortName evidence="1">RuBisCO small subunit</shortName>
    </recommendedName>
</protein>
<reference key="1">
    <citation type="journal article" date="1991" name="Plant Mol. Biol.">
        <title>Sequence of an rbcS gene from cotton.</title>
        <authorList>
            <person name="Sagliocco F."/>
            <person name="Kapazoglou A."/>
            <person name="Dure L. III"/>
        </authorList>
    </citation>
    <scope>NUCLEOTIDE SEQUENCE [GENOMIC DNA]</scope>
    <source>
        <strain>cv. Coker 201</strain>
        <tissue>Leaf</tissue>
    </source>
</reference>
<organism>
    <name type="scientific">Gossypium hirsutum</name>
    <name type="common">Upland cotton</name>
    <name type="synonym">Gossypium mexicanum</name>
    <dbReference type="NCBI Taxonomy" id="3635"/>
    <lineage>
        <taxon>Eukaryota</taxon>
        <taxon>Viridiplantae</taxon>
        <taxon>Streptophyta</taxon>
        <taxon>Embryophyta</taxon>
        <taxon>Tracheophyta</taxon>
        <taxon>Spermatophyta</taxon>
        <taxon>Magnoliopsida</taxon>
        <taxon>eudicotyledons</taxon>
        <taxon>Gunneridae</taxon>
        <taxon>Pentapetalae</taxon>
        <taxon>rosids</taxon>
        <taxon>malvids</taxon>
        <taxon>Malvales</taxon>
        <taxon>Malvaceae</taxon>
        <taxon>Malvoideae</taxon>
        <taxon>Gossypium</taxon>
    </lineage>
</organism>
<keyword id="KW-0113">Calvin cycle</keyword>
<keyword id="KW-0120">Carbon dioxide fixation</keyword>
<keyword id="KW-0150">Chloroplast</keyword>
<keyword id="KW-0601">Photorespiration</keyword>
<keyword id="KW-0602">Photosynthesis</keyword>
<keyword id="KW-0934">Plastid</keyword>
<keyword id="KW-1185">Reference proteome</keyword>
<keyword id="KW-0809">Transit peptide</keyword>
<sequence>MASSMISSATIATVNCSSPAQANMVAPFTGLKSASAFPVTRKANNDITSLASNGGRVQCMQVWPPLGKKKFETLSYLPDLTPVQLAKEVDYLLRSKWIPCLEFELEEGFVHRKYSSLPTYYDGRYWTMWKLPMFGCTDSAQVLEELENCKKEYPNAFIRIIGFDNVRQVQCISFIAYKPKGY</sequence>
<proteinExistence type="inferred from homology"/>
<evidence type="ECO:0000255" key="1">
    <source>
        <dbReference type="HAMAP-Rule" id="MF_00860"/>
    </source>
</evidence>
<comment type="function">
    <text evidence="1">RuBisCO catalyzes two reactions: the carboxylation of D-ribulose 1,5-bisphosphate, the primary event in carbon dioxide fixation, as well as the oxidative fragmentation of the pentose substrate. Both reactions occur simultaneously and in competition at the same active site. Although the small subunit is not catalytic it is essential for maximal activity.</text>
</comment>
<comment type="subunit">
    <text evidence="1">Heterohexadecamer of 8 large and 8 small subunits.</text>
</comment>
<comment type="subcellular location">
    <subcellularLocation>
        <location evidence="1">Plastid</location>
        <location evidence="1">Chloroplast</location>
    </subcellularLocation>
</comment>
<comment type="miscellaneous">
    <text evidence="1">The basic functional RuBisCO is composed of a large chain homodimer in a 'head-to-tail' conformation. In form I RuBisCO this homodimer is arranged in a barrel-like tetramer with the small subunits forming a tetrameric 'cap' on each end of the 'barrel'.</text>
</comment>
<comment type="similarity">
    <text evidence="1">Belongs to the RuBisCO small chain family.</text>
</comment>